<comment type="function">
    <text evidence="1">Involved in the degradation of certain denaturated proteins, including DnaA, during heat shock stress.</text>
</comment>
<comment type="subcellular location">
    <subcellularLocation>
        <location evidence="1">Cytoplasm</location>
    </subcellularLocation>
</comment>
<comment type="similarity">
    <text evidence="1">Belongs to the HspQ family.</text>
</comment>
<gene>
    <name evidence="1" type="primary">hspQ</name>
    <name type="ordered locus">YPTS_1568</name>
</gene>
<name>HSPQ_YERPB</name>
<reference key="1">
    <citation type="submission" date="2008-04" db="EMBL/GenBank/DDBJ databases">
        <title>Complete sequence of Yersinia pseudotuberculosis PB1/+.</title>
        <authorList>
            <person name="Copeland A."/>
            <person name="Lucas S."/>
            <person name="Lapidus A."/>
            <person name="Glavina del Rio T."/>
            <person name="Dalin E."/>
            <person name="Tice H."/>
            <person name="Bruce D."/>
            <person name="Goodwin L."/>
            <person name="Pitluck S."/>
            <person name="Munk A.C."/>
            <person name="Brettin T."/>
            <person name="Detter J.C."/>
            <person name="Han C."/>
            <person name="Tapia R."/>
            <person name="Schmutz J."/>
            <person name="Larimer F."/>
            <person name="Land M."/>
            <person name="Hauser L."/>
            <person name="Challacombe J.F."/>
            <person name="Green L."/>
            <person name="Lindler L.E."/>
            <person name="Nikolich M.P."/>
            <person name="Richardson P."/>
        </authorList>
    </citation>
    <scope>NUCLEOTIDE SEQUENCE [LARGE SCALE GENOMIC DNA]</scope>
    <source>
        <strain>PB1/+</strain>
    </source>
</reference>
<keyword id="KW-0963">Cytoplasm</keyword>
<keyword id="KW-0346">Stress response</keyword>
<proteinExistence type="inferred from homology"/>
<protein>
    <recommendedName>
        <fullName evidence="1">Heat shock protein HspQ</fullName>
    </recommendedName>
</protein>
<accession>B2JYU3</accession>
<feature type="chain" id="PRO_1000138422" description="Heat shock protein HspQ">
    <location>
        <begin position="1"/>
        <end position="105"/>
    </location>
</feature>
<feature type="region of interest" description="Disordered" evidence="2">
    <location>
        <begin position="80"/>
        <end position="105"/>
    </location>
</feature>
<sequence>MIASKFGIGQQVRHSLHGYLGVVIDIDPEYSLAPPEPDEVANNKTLRSSPWYHVVIEDDDGQPVHTYLAEAQLTYEDVDAHPEQPSLDELAASIRHQLQAPHLRN</sequence>
<dbReference type="EMBL" id="CP001048">
    <property type="protein sequence ID" value="ACC88540.1"/>
    <property type="molecule type" value="Genomic_DNA"/>
</dbReference>
<dbReference type="RefSeq" id="WP_002213054.1">
    <property type="nucleotide sequence ID" value="NZ_CP009780.1"/>
</dbReference>
<dbReference type="SMR" id="B2JYU3"/>
<dbReference type="GeneID" id="57977119"/>
<dbReference type="KEGG" id="ypb:YPTS_1568"/>
<dbReference type="PATRIC" id="fig|502801.10.peg.933"/>
<dbReference type="GO" id="GO:0005737">
    <property type="term" value="C:cytoplasm"/>
    <property type="evidence" value="ECO:0007669"/>
    <property type="project" value="UniProtKB-SubCell"/>
</dbReference>
<dbReference type="GO" id="GO:0003677">
    <property type="term" value="F:DNA binding"/>
    <property type="evidence" value="ECO:0007669"/>
    <property type="project" value="InterPro"/>
</dbReference>
<dbReference type="GO" id="GO:0009408">
    <property type="term" value="P:response to heat"/>
    <property type="evidence" value="ECO:0007669"/>
    <property type="project" value="UniProtKB-UniRule"/>
</dbReference>
<dbReference type="Gene3D" id="2.30.30.390">
    <property type="entry name" value="Hemimethylated DNA-binding domain"/>
    <property type="match status" value="1"/>
</dbReference>
<dbReference type="HAMAP" id="MF_01194">
    <property type="entry name" value="HspQ"/>
    <property type="match status" value="1"/>
</dbReference>
<dbReference type="InterPro" id="IPR011722">
    <property type="entry name" value="Hemimethylated_DNA-bd_dom"/>
</dbReference>
<dbReference type="InterPro" id="IPR036623">
    <property type="entry name" value="Hemimethylated_DNA-bd_sf"/>
</dbReference>
<dbReference type="InterPro" id="IPR022866">
    <property type="entry name" value="HspQ"/>
</dbReference>
<dbReference type="NCBIfam" id="NF010729">
    <property type="entry name" value="PRK14129.1"/>
    <property type="match status" value="1"/>
</dbReference>
<dbReference type="NCBIfam" id="TIGR02097">
    <property type="entry name" value="yccV"/>
    <property type="match status" value="1"/>
</dbReference>
<dbReference type="Pfam" id="PF08755">
    <property type="entry name" value="YccV-like"/>
    <property type="match status" value="1"/>
</dbReference>
<dbReference type="SMART" id="SM00992">
    <property type="entry name" value="YccV-like"/>
    <property type="match status" value="1"/>
</dbReference>
<dbReference type="SUPFAM" id="SSF141255">
    <property type="entry name" value="YccV-like"/>
    <property type="match status" value="1"/>
</dbReference>
<organism>
    <name type="scientific">Yersinia pseudotuberculosis serotype IB (strain PB1/+)</name>
    <dbReference type="NCBI Taxonomy" id="502801"/>
    <lineage>
        <taxon>Bacteria</taxon>
        <taxon>Pseudomonadati</taxon>
        <taxon>Pseudomonadota</taxon>
        <taxon>Gammaproteobacteria</taxon>
        <taxon>Enterobacterales</taxon>
        <taxon>Yersiniaceae</taxon>
        <taxon>Yersinia</taxon>
    </lineage>
</organism>
<evidence type="ECO:0000255" key="1">
    <source>
        <dbReference type="HAMAP-Rule" id="MF_01194"/>
    </source>
</evidence>
<evidence type="ECO:0000256" key="2">
    <source>
        <dbReference type="SAM" id="MobiDB-lite"/>
    </source>
</evidence>